<feature type="chain" id="PRO_1000213186" description="Transcriptional regulator MraZ">
    <location>
        <begin position="1"/>
        <end position="152"/>
    </location>
</feature>
<feature type="domain" description="SpoVT-AbrB 1" evidence="2">
    <location>
        <begin position="5"/>
        <end position="52"/>
    </location>
</feature>
<feature type="domain" description="SpoVT-AbrB 2" evidence="2">
    <location>
        <begin position="81"/>
        <end position="124"/>
    </location>
</feature>
<sequence>MLRGAHAIALDTKGRLAVPTRYRDWLREECEGQLVCTIDIANPCLLLYPLCEWEEIEKKLKSLSGMNPVERRLQRLLLGYASECELDGNGRLLLSAPLRQHAGLDKQVMLVGQLNKFEIWSETRWLQQVDEDIQALPEMDWTISDKLRDFSL</sequence>
<name>MRAZ_TOLAT</name>
<comment type="subunit">
    <text evidence="1">Forms oligomers.</text>
</comment>
<comment type="subcellular location">
    <subcellularLocation>
        <location evidence="1">Cytoplasm</location>
        <location evidence="1">Nucleoid</location>
    </subcellularLocation>
</comment>
<comment type="similarity">
    <text evidence="1">Belongs to the MraZ family.</text>
</comment>
<accession>C4LA16</accession>
<dbReference type="EMBL" id="CP001616">
    <property type="protein sequence ID" value="ACQ92145.1"/>
    <property type="molecule type" value="Genomic_DNA"/>
</dbReference>
<dbReference type="RefSeq" id="WP_012728744.1">
    <property type="nucleotide sequence ID" value="NC_012691.1"/>
</dbReference>
<dbReference type="SMR" id="C4LA16"/>
<dbReference type="STRING" id="595494.Tola_0516"/>
<dbReference type="KEGG" id="tau:Tola_0516"/>
<dbReference type="eggNOG" id="COG2001">
    <property type="taxonomic scope" value="Bacteria"/>
</dbReference>
<dbReference type="HOGENOM" id="CLU_107907_2_0_6"/>
<dbReference type="OrthoDB" id="9807753at2"/>
<dbReference type="Proteomes" id="UP000009073">
    <property type="component" value="Chromosome"/>
</dbReference>
<dbReference type="GO" id="GO:0005737">
    <property type="term" value="C:cytoplasm"/>
    <property type="evidence" value="ECO:0007669"/>
    <property type="project" value="UniProtKB-UniRule"/>
</dbReference>
<dbReference type="GO" id="GO:0009295">
    <property type="term" value="C:nucleoid"/>
    <property type="evidence" value="ECO:0007669"/>
    <property type="project" value="UniProtKB-SubCell"/>
</dbReference>
<dbReference type="GO" id="GO:0003700">
    <property type="term" value="F:DNA-binding transcription factor activity"/>
    <property type="evidence" value="ECO:0007669"/>
    <property type="project" value="UniProtKB-UniRule"/>
</dbReference>
<dbReference type="GO" id="GO:0000976">
    <property type="term" value="F:transcription cis-regulatory region binding"/>
    <property type="evidence" value="ECO:0007669"/>
    <property type="project" value="TreeGrafter"/>
</dbReference>
<dbReference type="GO" id="GO:2000143">
    <property type="term" value="P:negative regulation of DNA-templated transcription initiation"/>
    <property type="evidence" value="ECO:0007669"/>
    <property type="project" value="TreeGrafter"/>
</dbReference>
<dbReference type="CDD" id="cd16321">
    <property type="entry name" value="MraZ_C"/>
    <property type="match status" value="1"/>
</dbReference>
<dbReference type="CDD" id="cd16320">
    <property type="entry name" value="MraZ_N"/>
    <property type="match status" value="1"/>
</dbReference>
<dbReference type="FunFam" id="3.40.1550.20:FF:000001">
    <property type="entry name" value="Transcriptional regulator MraZ"/>
    <property type="match status" value="1"/>
</dbReference>
<dbReference type="Gene3D" id="3.40.1550.20">
    <property type="entry name" value="Transcriptional regulator MraZ domain"/>
    <property type="match status" value="1"/>
</dbReference>
<dbReference type="HAMAP" id="MF_01008">
    <property type="entry name" value="MraZ"/>
    <property type="match status" value="1"/>
</dbReference>
<dbReference type="InterPro" id="IPR003444">
    <property type="entry name" value="MraZ"/>
</dbReference>
<dbReference type="InterPro" id="IPR035644">
    <property type="entry name" value="MraZ_C"/>
</dbReference>
<dbReference type="InterPro" id="IPR020603">
    <property type="entry name" value="MraZ_dom"/>
</dbReference>
<dbReference type="InterPro" id="IPR035642">
    <property type="entry name" value="MraZ_N"/>
</dbReference>
<dbReference type="InterPro" id="IPR038619">
    <property type="entry name" value="MraZ_sf"/>
</dbReference>
<dbReference type="InterPro" id="IPR007159">
    <property type="entry name" value="SpoVT-AbrB_dom"/>
</dbReference>
<dbReference type="InterPro" id="IPR037914">
    <property type="entry name" value="SpoVT-AbrB_sf"/>
</dbReference>
<dbReference type="NCBIfam" id="TIGR00242">
    <property type="entry name" value="division/cell wall cluster transcriptional repressor MraZ"/>
    <property type="match status" value="1"/>
</dbReference>
<dbReference type="PANTHER" id="PTHR34701">
    <property type="entry name" value="TRANSCRIPTIONAL REGULATOR MRAZ"/>
    <property type="match status" value="1"/>
</dbReference>
<dbReference type="PANTHER" id="PTHR34701:SF1">
    <property type="entry name" value="TRANSCRIPTIONAL REGULATOR MRAZ"/>
    <property type="match status" value="1"/>
</dbReference>
<dbReference type="Pfam" id="PF02381">
    <property type="entry name" value="MraZ"/>
    <property type="match status" value="2"/>
</dbReference>
<dbReference type="SUPFAM" id="SSF89447">
    <property type="entry name" value="AbrB/MazE/MraZ-like"/>
    <property type="match status" value="1"/>
</dbReference>
<dbReference type="PROSITE" id="PS51740">
    <property type="entry name" value="SPOVT_ABRB"/>
    <property type="match status" value="2"/>
</dbReference>
<reference key="1">
    <citation type="submission" date="2009-05" db="EMBL/GenBank/DDBJ databases">
        <title>Complete sequence of Tolumonas auensis DSM 9187.</title>
        <authorList>
            <consortium name="US DOE Joint Genome Institute"/>
            <person name="Lucas S."/>
            <person name="Copeland A."/>
            <person name="Lapidus A."/>
            <person name="Glavina del Rio T."/>
            <person name="Tice H."/>
            <person name="Bruce D."/>
            <person name="Goodwin L."/>
            <person name="Pitluck S."/>
            <person name="Chertkov O."/>
            <person name="Brettin T."/>
            <person name="Detter J.C."/>
            <person name="Han C."/>
            <person name="Larimer F."/>
            <person name="Land M."/>
            <person name="Hauser L."/>
            <person name="Kyrpides N."/>
            <person name="Mikhailova N."/>
            <person name="Spring S."/>
            <person name="Beller H."/>
        </authorList>
    </citation>
    <scope>NUCLEOTIDE SEQUENCE [LARGE SCALE GENOMIC DNA]</scope>
    <source>
        <strain>DSM 9187 / NBRC 110442 / TA 4</strain>
    </source>
</reference>
<protein>
    <recommendedName>
        <fullName>Transcriptional regulator MraZ</fullName>
    </recommendedName>
</protein>
<gene>
    <name evidence="1" type="primary">mraZ</name>
    <name type="ordered locus">Tola_0516</name>
</gene>
<evidence type="ECO:0000255" key="1">
    <source>
        <dbReference type="HAMAP-Rule" id="MF_01008"/>
    </source>
</evidence>
<evidence type="ECO:0000255" key="2">
    <source>
        <dbReference type="PROSITE-ProRule" id="PRU01076"/>
    </source>
</evidence>
<proteinExistence type="inferred from homology"/>
<keyword id="KW-0963">Cytoplasm</keyword>
<keyword id="KW-0238">DNA-binding</keyword>
<keyword id="KW-1185">Reference proteome</keyword>
<keyword id="KW-0677">Repeat</keyword>
<keyword id="KW-0804">Transcription</keyword>
<keyword id="KW-0805">Transcription regulation</keyword>
<organism>
    <name type="scientific">Tolumonas auensis (strain DSM 9187 / NBRC 110442 / TA 4)</name>
    <dbReference type="NCBI Taxonomy" id="595494"/>
    <lineage>
        <taxon>Bacteria</taxon>
        <taxon>Pseudomonadati</taxon>
        <taxon>Pseudomonadota</taxon>
        <taxon>Gammaproteobacteria</taxon>
        <taxon>Aeromonadales</taxon>
        <taxon>Aeromonadaceae</taxon>
        <taxon>Tolumonas</taxon>
    </lineage>
</organism>